<gene>
    <name type="primary">mmpL7</name>
    <name type="ordered locus">BQ2027_MB2967</name>
</gene>
<proteinExistence type="inferred from homology"/>
<name>MMPL7_MYCBO</name>
<organism>
    <name type="scientific">Mycobacterium bovis (strain ATCC BAA-935 / AF2122/97)</name>
    <dbReference type="NCBI Taxonomy" id="233413"/>
    <lineage>
        <taxon>Bacteria</taxon>
        <taxon>Bacillati</taxon>
        <taxon>Actinomycetota</taxon>
        <taxon>Actinomycetes</taxon>
        <taxon>Mycobacteriales</taxon>
        <taxon>Mycobacteriaceae</taxon>
        <taxon>Mycobacterium</taxon>
        <taxon>Mycobacterium tuberculosis complex</taxon>
    </lineage>
</organism>
<sequence>MPSPAGRLHRIRYIRLKKSSPDCRATITSGSADGQRRSPRLTNLLVVAAWVAAAVIANLLLTFTQAEPHDTSPALLPQDAKTAAATSRIAQAFPGTGSNAIAYLVVEGGSTLEPQDQPYYDAAVGALRADTRHVGSVLDWWSDPVTAPLGTSPDGRSATAMVWLRGEAGTTQAAESLDAVRSVLRQLPPSEGLRASIVVPAITNDMPMQITAWQSATIVTVAAVIAVLLLLRARLSVRAAAIVLLTADLSLAVAWPLAAVVRGHDWGTDSVFSWTLAAVLTIGTITAATMLAARLGSDAGHSAAPTYRDSLPAFALPGACVAIFTGPLLLARTPALHGVGTAGLGVFVALAASLTVLPALIALAGASRQLPAPTTGAGWTGRLSLPVSSASALGTAAVLAICMLPIIGMRWGVAENPTRQGGAQVLPGNALPDVVVIKSARDLRDPAALIAINQVSHRLVEVPGVRKVESAAWPAGVPWTDASLSSAAGRLADQLGQQAGSFVPAVTAIKSMKSIIEQMSGAVDQLDSTVNVTLAGARQAQQYLDPMLAAARNLKNKTTELSEYLETIHTWIVGFTNCPDDVLCTAMRKVIEPYDIVVTGMNELSTGADRISAISTQTMSALSSAPRMVAQMRSALAQVRSFVPKLETTIQDAMPQIAQASAMLKNLSADFADTGEGGFHLSRKDLADPSYRHVRESMFSSDGTATRLFLYSDGQLDLAAAARAQQLEIAAGKAMKYGSLVDSQVTVGGAAQIAAAVRDALIHDAVLLAVILLTVVALASMWRGAVHGAAVGVGVLASYLAALGVSIALWQHLLDRELNALVPLVSFAVLASCGVPYLVAGIKAGRIADEATGARSKGAVSGRGAVAPLAALGGVFGAGLVLVSGGSFSVLSQIGTVVVLGLGVLITVQRAWLPTTPGRR</sequence>
<keyword id="KW-1003">Cell membrane</keyword>
<keyword id="KW-0472">Membrane</keyword>
<keyword id="KW-1185">Reference proteome</keyword>
<keyword id="KW-0812">Transmembrane</keyword>
<keyword id="KW-1133">Transmembrane helix</keyword>
<keyword id="KW-0813">Transport</keyword>
<dbReference type="EMBL" id="LT708304">
    <property type="protein sequence ID" value="SIU01588.1"/>
    <property type="molecule type" value="Genomic_DNA"/>
</dbReference>
<dbReference type="RefSeq" id="NP_856612.1">
    <property type="nucleotide sequence ID" value="NC_002945.3"/>
</dbReference>
<dbReference type="RefSeq" id="WP_003414861.1">
    <property type="nucleotide sequence ID" value="NC_002945.4"/>
</dbReference>
<dbReference type="SMR" id="P65371"/>
<dbReference type="KEGG" id="mbo:BQ2027_MB2967"/>
<dbReference type="PATRIC" id="fig|233413.5.peg.3256"/>
<dbReference type="Proteomes" id="UP000001419">
    <property type="component" value="Chromosome"/>
</dbReference>
<dbReference type="GO" id="GO:0005886">
    <property type="term" value="C:plasma membrane"/>
    <property type="evidence" value="ECO:0007669"/>
    <property type="project" value="UniProtKB-SubCell"/>
</dbReference>
<dbReference type="InterPro" id="IPR004869">
    <property type="entry name" value="MMPL_dom"/>
</dbReference>
<dbReference type="InterPro" id="IPR050545">
    <property type="entry name" value="Mycobact_MmpL"/>
</dbReference>
<dbReference type="PANTHER" id="PTHR33406">
    <property type="entry name" value="MEMBRANE PROTEIN MJ1562-RELATED"/>
    <property type="match status" value="1"/>
</dbReference>
<dbReference type="PANTHER" id="PTHR33406:SF6">
    <property type="entry name" value="MEMBRANE PROTEIN YDGH-RELATED"/>
    <property type="match status" value="1"/>
</dbReference>
<dbReference type="Pfam" id="PF03176">
    <property type="entry name" value="MMPL"/>
    <property type="match status" value="2"/>
</dbReference>
<dbReference type="SUPFAM" id="SSF82866">
    <property type="entry name" value="Multidrug efflux transporter AcrB transmembrane domain"/>
    <property type="match status" value="1"/>
</dbReference>
<protein>
    <recommendedName>
        <fullName evidence="2">Probable transport protein MmpL7</fullName>
    </recommendedName>
</protein>
<comment type="subcellular location">
    <subcellularLocation>
        <location evidence="2">Cell membrane</location>
        <topology evidence="2">Multi-pass membrane protein</topology>
    </subcellularLocation>
</comment>
<comment type="similarity">
    <text evidence="2">Belongs to the resistance-nodulation-cell division (RND) (TC 2.A.6) family. MmpL subfamily.</text>
</comment>
<reference key="1">
    <citation type="journal article" date="2003" name="Proc. Natl. Acad. Sci. U.S.A.">
        <title>The complete genome sequence of Mycobacterium bovis.</title>
        <authorList>
            <person name="Garnier T."/>
            <person name="Eiglmeier K."/>
            <person name="Camus J.-C."/>
            <person name="Medina N."/>
            <person name="Mansoor H."/>
            <person name="Pryor M."/>
            <person name="Duthoy S."/>
            <person name="Grondin S."/>
            <person name="Lacroix C."/>
            <person name="Monsempe C."/>
            <person name="Simon S."/>
            <person name="Harris B."/>
            <person name="Atkin R."/>
            <person name="Doggett J."/>
            <person name="Mayes R."/>
            <person name="Keating L."/>
            <person name="Wheeler P.R."/>
            <person name="Parkhill J."/>
            <person name="Barrell B.G."/>
            <person name="Cole S.T."/>
            <person name="Gordon S.V."/>
            <person name="Hewinson R.G."/>
        </authorList>
    </citation>
    <scope>NUCLEOTIDE SEQUENCE [LARGE SCALE GENOMIC DNA]</scope>
    <source>
        <strain>ATCC BAA-935 / AF2122/97</strain>
    </source>
</reference>
<reference key="2">
    <citation type="journal article" date="2017" name="Genome Announc.">
        <title>Updated reference genome sequence and annotation of Mycobacterium bovis AF2122/97.</title>
        <authorList>
            <person name="Malone K.M."/>
            <person name="Farrell D."/>
            <person name="Stuber T.P."/>
            <person name="Schubert O.T."/>
            <person name="Aebersold R."/>
            <person name="Robbe-Austerman S."/>
            <person name="Gordon S.V."/>
        </authorList>
    </citation>
    <scope>NUCLEOTIDE SEQUENCE [LARGE SCALE GENOMIC DNA]</scope>
    <scope>GENOME REANNOTATION</scope>
    <source>
        <strain>ATCC BAA-935 / AF2122/97</strain>
    </source>
</reference>
<feature type="chain" id="PRO_0000103571" description="Probable transport protein MmpL7">
    <location>
        <begin position="1"/>
        <end position="920"/>
    </location>
</feature>
<feature type="transmembrane region" description="Helical" evidence="1">
    <location>
        <begin position="44"/>
        <end position="64"/>
    </location>
</feature>
<feature type="transmembrane region" description="Helical" evidence="1">
    <location>
        <begin position="210"/>
        <end position="230"/>
    </location>
</feature>
<feature type="transmembrane region" description="Helical" evidence="1">
    <location>
        <begin position="241"/>
        <end position="261"/>
    </location>
</feature>
<feature type="transmembrane region" description="Helical" evidence="1">
    <location>
        <begin position="271"/>
        <end position="291"/>
    </location>
</feature>
<feature type="transmembrane region" description="Helical" evidence="1">
    <location>
        <begin position="311"/>
        <end position="331"/>
    </location>
</feature>
<feature type="transmembrane region" description="Helical" evidence="1">
    <location>
        <begin position="344"/>
        <end position="364"/>
    </location>
</feature>
<feature type="transmembrane region" description="Helical" evidence="1">
    <location>
        <begin position="389"/>
        <end position="409"/>
    </location>
</feature>
<feature type="transmembrane region" description="Helical" evidence="1">
    <location>
        <begin position="761"/>
        <end position="781"/>
    </location>
</feature>
<feature type="transmembrane region" description="Helical" evidence="1">
    <location>
        <begin position="790"/>
        <end position="810"/>
    </location>
</feature>
<feature type="transmembrane region" description="Helical" evidence="1">
    <location>
        <begin position="822"/>
        <end position="842"/>
    </location>
</feature>
<feature type="transmembrane region" description="Helical" evidence="1">
    <location>
        <begin position="864"/>
        <end position="884"/>
    </location>
</feature>
<feature type="transmembrane region" description="Helical" evidence="1">
    <location>
        <begin position="888"/>
        <end position="908"/>
    </location>
</feature>
<evidence type="ECO:0000255" key="1"/>
<evidence type="ECO:0000305" key="2"/>
<accession>P65371</accession>
<accession>A0A1R3Y320</accession>
<accession>P96289</accession>
<accession>X2BM63</accession>